<sequence length="469" mass="51838">MTRPVRTRFAPSPTGFIHLGNIRSALYPWAFARKMKGTFVLRIEDTDVERSSQEAVDAILEGMQWLGLDFDEGPIYQMQRMDRYREVLAQMLEKGLAYPCYMSAEELDALRERQREAGLKPRYDGTWRPEPGKVLPEPPAGVKPVLRFRNPLTGTVVWDDAVKGRVEISNEELDDLVIARPDGTPIYNFCVVVDDMDMGITHVIRGDDHVNNTPRQINILNALGGEPPVYAHLPTVLNEQGEKMSKRHGAMSVMAYRDAGFLPEAVVNYLARLGWSHGDAEIFSREQFVEWFDLEHLGKSPAQYDHSKLSWLNAHYIKEADNARLAELAKPFLDALGIDDAAIATGPALDAVVGLMKDRATTVKEIAEGAAMFYRVPAPDADALAQHVTDAVRPALADLAAALKAADWTKEAVSAALKATLATHKLKMPQLAMPVRLLVAGTTHTPSIDAVLVLFGRDVVVTRIEAALA</sequence>
<organism>
    <name type="scientific">Burkholderia cenocepacia (strain HI2424)</name>
    <dbReference type="NCBI Taxonomy" id="331272"/>
    <lineage>
        <taxon>Bacteria</taxon>
        <taxon>Pseudomonadati</taxon>
        <taxon>Pseudomonadota</taxon>
        <taxon>Betaproteobacteria</taxon>
        <taxon>Burkholderiales</taxon>
        <taxon>Burkholderiaceae</taxon>
        <taxon>Burkholderia</taxon>
        <taxon>Burkholderia cepacia complex</taxon>
    </lineage>
</organism>
<keyword id="KW-0030">Aminoacyl-tRNA synthetase</keyword>
<keyword id="KW-0067">ATP-binding</keyword>
<keyword id="KW-0963">Cytoplasm</keyword>
<keyword id="KW-0436">Ligase</keyword>
<keyword id="KW-0547">Nucleotide-binding</keyword>
<keyword id="KW-0648">Protein biosynthesis</keyword>
<reference key="1">
    <citation type="submission" date="2006-08" db="EMBL/GenBank/DDBJ databases">
        <title>Complete sequence of chromosome 1 of Burkholderia cenocepacia HI2424.</title>
        <authorList>
            <person name="Copeland A."/>
            <person name="Lucas S."/>
            <person name="Lapidus A."/>
            <person name="Barry K."/>
            <person name="Detter J.C."/>
            <person name="Glavina del Rio T."/>
            <person name="Hammon N."/>
            <person name="Israni S."/>
            <person name="Pitluck S."/>
            <person name="Chain P."/>
            <person name="Malfatti S."/>
            <person name="Shin M."/>
            <person name="Vergez L."/>
            <person name="Schmutz J."/>
            <person name="Larimer F."/>
            <person name="Land M."/>
            <person name="Hauser L."/>
            <person name="Kyrpides N."/>
            <person name="Kim E."/>
            <person name="LiPuma J.J."/>
            <person name="Gonzalez C.F."/>
            <person name="Konstantinidis K."/>
            <person name="Tiedje J.M."/>
            <person name="Richardson P."/>
        </authorList>
    </citation>
    <scope>NUCLEOTIDE SEQUENCE [LARGE SCALE GENOMIC DNA]</scope>
    <source>
        <strain>HI2424</strain>
    </source>
</reference>
<evidence type="ECO:0000255" key="1">
    <source>
        <dbReference type="HAMAP-Rule" id="MF_00022"/>
    </source>
</evidence>
<gene>
    <name evidence="1" type="primary">gltX</name>
    <name type="ordered locus">Bcen2424_2056</name>
</gene>
<dbReference type="EC" id="6.1.1.17" evidence="1"/>
<dbReference type="EMBL" id="CP000458">
    <property type="protein sequence ID" value="ABK08807.1"/>
    <property type="molecule type" value="Genomic_DNA"/>
</dbReference>
<dbReference type="RefSeq" id="WP_011694315.1">
    <property type="nucleotide sequence ID" value="NC_008542.1"/>
</dbReference>
<dbReference type="SMR" id="A0K8I0"/>
<dbReference type="GeneID" id="83048858"/>
<dbReference type="KEGG" id="bch:Bcen2424_2056"/>
<dbReference type="HOGENOM" id="CLU_015768_6_0_4"/>
<dbReference type="GO" id="GO:0005829">
    <property type="term" value="C:cytosol"/>
    <property type="evidence" value="ECO:0007669"/>
    <property type="project" value="TreeGrafter"/>
</dbReference>
<dbReference type="GO" id="GO:0005524">
    <property type="term" value="F:ATP binding"/>
    <property type="evidence" value="ECO:0007669"/>
    <property type="project" value="UniProtKB-UniRule"/>
</dbReference>
<dbReference type="GO" id="GO:0004818">
    <property type="term" value="F:glutamate-tRNA ligase activity"/>
    <property type="evidence" value="ECO:0007669"/>
    <property type="project" value="UniProtKB-UniRule"/>
</dbReference>
<dbReference type="GO" id="GO:0000049">
    <property type="term" value="F:tRNA binding"/>
    <property type="evidence" value="ECO:0007669"/>
    <property type="project" value="InterPro"/>
</dbReference>
<dbReference type="GO" id="GO:0008270">
    <property type="term" value="F:zinc ion binding"/>
    <property type="evidence" value="ECO:0007669"/>
    <property type="project" value="InterPro"/>
</dbReference>
<dbReference type="GO" id="GO:0006424">
    <property type="term" value="P:glutamyl-tRNA aminoacylation"/>
    <property type="evidence" value="ECO:0007669"/>
    <property type="project" value="UniProtKB-UniRule"/>
</dbReference>
<dbReference type="CDD" id="cd00808">
    <property type="entry name" value="GluRS_core"/>
    <property type="match status" value="1"/>
</dbReference>
<dbReference type="FunFam" id="3.40.50.620:FF:000007">
    <property type="entry name" value="Glutamate--tRNA ligase"/>
    <property type="match status" value="1"/>
</dbReference>
<dbReference type="Gene3D" id="1.10.10.350">
    <property type="match status" value="1"/>
</dbReference>
<dbReference type="Gene3D" id="1.10.8.70">
    <property type="entry name" value="Glutamate-tRNA synthetase, class I, anticodon-binding domain 1"/>
    <property type="match status" value="1"/>
</dbReference>
<dbReference type="Gene3D" id="3.40.50.620">
    <property type="entry name" value="HUPs"/>
    <property type="match status" value="1"/>
</dbReference>
<dbReference type="HAMAP" id="MF_00022">
    <property type="entry name" value="Glu_tRNA_synth_type1"/>
    <property type="match status" value="1"/>
</dbReference>
<dbReference type="InterPro" id="IPR045462">
    <property type="entry name" value="aa-tRNA-synth_I_cd-bd"/>
</dbReference>
<dbReference type="InterPro" id="IPR020751">
    <property type="entry name" value="aa-tRNA-synth_I_codon-bd_sub2"/>
</dbReference>
<dbReference type="InterPro" id="IPR001412">
    <property type="entry name" value="aa-tRNA-synth_I_CS"/>
</dbReference>
<dbReference type="InterPro" id="IPR008925">
    <property type="entry name" value="aa_tRNA-synth_I_cd-bd_sf"/>
</dbReference>
<dbReference type="InterPro" id="IPR004527">
    <property type="entry name" value="Glu-tRNA-ligase_bac/mito"/>
</dbReference>
<dbReference type="InterPro" id="IPR020752">
    <property type="entry name" value="Glu-tRNA-synth_I_codon-bd_sub1"/>
</dbReference>
<dbReference type="InterPro" id="IPR000924">
    <property type="entry name" value="Glu/Gln-tRNA-synth"/>
</dbReference>
<dbReference type="InterPro" id="IPR020058">
    <property type="entry name" value="Glu/Gln-tRNA-synth_Ib_cat-dom"/>
</dbReference>
<dbReference type="InterPro" id="IPR049940">
    <property type="entry name" value="GluQ/Sye"/>
</dbReference>
<dbReference type="InterPro" id="IPR033910">
    <property type="entry name" value="GluRS_core"/>
</dbReference>
<dbReference type="InterPro" id="IPR014729">
    <property type="entry name" value="Rossmann-like_a/b/a_fold"/>
</dbReference>
<dbReference type="NCBIfam" id="TIGR00464">
    <property type="entry name" value="gltX_bact"/>
    <property type="match status" value="1"/>
</dbReference>
<dbReference type="PANTHER" id="PTHR43311">
    <property type="entry name" value="GLUTAMATE--TRNA LIGASE"/>
    <property type="match status" value="1"/>
</dbReference>
<dbReference type="PANTHER" id="PTHR43311:SF2">
    <property type="entry name" value="GLUTAMATE--TRNA LIGASE, MITOCHONDRIAL-RELATED"/>
    <property type="match status" value="1"/>
</dbReference>
<dbReference type="Pfam" id="PF19269">
    <property type="entry name" value="Anticodon_2"/>
    <property type="match status" value="1"/>
</dbReference>
<dbReference type="Pfam" id="PF00749">
    <property type="entry name" value="tRNA-synt_1c"/>
    <property type="match status" value="1"/>
</dbReference>
<dbReference type="PRINTS" id="PR00987">
    <property type="entry name" value="TRNASYNTHGLU"/>
</dbReference>
<dbReference type="SUPFAM" id="SSF48163">
    <property type="entry name" value="An anticodon-binding domain of class I aminoacyl-tRNA synthetases"/>
    <property type="match status" value="1"/>
</dbReference>
<dbReference type="SUPFAM" id="SSF52374">
    <property type="entry name" value="Nucleotidylyl transferase"/>
    <property type="match status" value="1"/>
</dbReference>
<dbReference type="PROSITE" id="PS00178">
    <property type="entry name" value="AA_TRNA_LIGASE_I"/>
    <property type="match status" value="1"/>
</dbReference>
<feature type="chain" id="PRO_1000001879" description="Glutamate--tRNA ligase">
    <location>
        <begin position="1"/>
        <end position="469"/>
    </location>
</feature>
<feature type="short sequence motif" description="'HIGH' region" evidence="1">
    <location>
        <begin position="11"/>
        <end position="21"/>
    </location>
</feature>
<feature type="short sequence motif" description="'KMSKS' region" evidence="1">
    <location>
        <begin position="243"/>
        <end position="247"/>
    </location>
</feature>
<feature type="binding site" evidence="1">
    <location>
        <position position="246"/>
    </location>
    <ligand>
        <name>ATP</name>
        <dbReference type="ChEBI" id="CHEBI:30616"/>
    </ligand>
</feature>
<comment type="function">
    <text evidence="1">Catalyzes the attachment of glutamate to tRNA(Glu) in a two-step reaction: glutamate is first activated by ATP to form Glu-AMP and then transferred to the acceptor end of tRNA(Glu).</text>
</comment>
<comment type="catalytic activity">
    <reaction evidence="1">
        <text>tRNA(Glu) + L-glutamate + ATP = L-glutamyl-tRNA(Glu) + AMP + diphosphate</text>
        <dbReference type="Rhea" id="RHEA:23540"/>
        <dbReference type="Rhea" id="RHEA-COMP:9663"/>
        <dbReference type="Rhea" id="RHEA-COMP:9680"/>
        <dbReference type="ChEBI" id="CHEBI:29985"/>
        <dbReference type="ChEBI" id="CHEBI:30616"/>
        <dbReference type="ChEBI" id="CHEBI:33019"/>
        <dbReference type="ChEBI" id="CHEBI:78442"/>
        <dbReference type="ChEBI" id="CHEBI:78520"/>
        <dbReference type="ChEBI" id="CHEBI:456215"/>
        <dbReference type="EC" id="6.1.1.17"/>
    </reaction>
</comment>
<comment type="subunit">
    <text evidence="1">Monomer.</text>
</comment>
<comment type="subcellular location">
    <subcellularLocation>
        <location evidence="1">Cytoplasm</location>
    </subcellularLocation>
</comment>
<comment type="similarity">
    <text evidence="1">Belongs to the class-I aminoacyl-tRNA synthetase family. Glutamate--tRNA ligase type 1 subfamily.</text>
</comment>
<protein>
    <recommendedName>
        <fullName evidence="1">Glutamate--tRNA ligase</fullName>
        <ecNumber evidence="1">6.1.1.17</ecNumber>
    </recommendedName>
    <alternativeName>
        <fullName evidence="1">Glutamyl-tRNA synthetase</fullName>
        <shortName evidence="1">GluRS</shortName>
    </alternativeName>
</protein>
<name>SYE_BURCH</name>
<proteinExistence type="inferred from homology"/>
<accession>A0K8I0</accession>